<dbReference type="EMBL" id="CP000480">
    <property type="protein sequence ID" value="ABK72048.1"/>
    <property type="molecule type" value="Genomic_DNA"/>
</dbReference>
<dbReference type="RefSeq" id="WP_011727621.1">
    <property type="nucleotide sequence ID" value="NZ_SIJM01000030.1"/>
</dbReference>
<dbReference type="RefSeq" id="YP_885744.1">
    <property type="nucleotide sequence ID" value="NC_008596.1"/>
</dbReference>
<dbReference type="SMR" id="A0QS56"/>
<dbReference type="STRING" id="246196.MSMEG_1359"/>
<dbReference type="PaxDb" id="246196-MSMEI_1319"/>
<dbReference type="KEGG" id="msm:MSMEG_1359"/>
<dbReference type="PATRIC" id="fig|246196.19.peg.1342"/>
<dbReference type="eggNOG" id="COG2378">
    <property type="taxonomic scope" value="Bacteria"/>
</dbReference>
<dbReference type="OrthoDB" id="8555652at2"/>
<dbReference type="Proteomes" id="UP000000757">
    <property type="component" value="Chromosome"/>
</dbReference>
<dbReference type="GO" id="GO:0001046">
    <property type="term" value="F:core promoter sequence-specific DNA binding"/>
    <property type="evidence" value="ECO:0000314"/>
    <property type="project" value="UniProtKB"/>
</dbReference>
<dbReference type="GO" id="GO:0001216">
    <property type="term" value="F:DNA-binding transcription activator activity"/>
    <property type="evidence" value="ECO:0000314"/>
    <property type="project" value="UniProtKB"/>
</dbReference>
<dbReference type="GO" id="GO:0042803">
    <property type="term" value="F:protein homodimerization activity"/>
    <property type="evidence" value="ECO:0000314"/>
    <property type="project" value="UniProtKB"/>
</dbReference>
<dbReference type="GO" id="GO:0003697">
    <property type="term" value="F:single-stranded DNA binding"/>
    <property type="evidence" value="ECO:0000314"/>
    <property type="project" value="UniProtKB"/>
</dbReference>
<dbReference type="GO" id="GO:0042772">
    <property type="term" value="P:DNA damage response, signal transduction resulting in transcription"/>
    <property type="evidence" value="ECO:0000314"/>
    <property type="project" value="UniProtKB"/>
</dbReference>
<dbReference type="GO" id="GO:0080135">
    <property type="term" value="P:regulation of cellular response to stress"/>
    <property type="evidence" value="ECO:0000314"/>
    <property type="project" value="UniProtKB"/>
</dbReference>
<dbReference type="Gene3D" id="1.10.10.10">
    <property type="entry name" value="Winged helix-like DNA-binding domain superfamily/Winged helix DNA-binding domain"/>
    <property type="match status" value="1"/>
</dbReference>
<dbReference type="InterPro" id="IPR051534">
    <property type="entry name" value="CBASS_pafABC_assoc_protein"/>
</dbReference>
<dbReference type="InterPro" id="IPR001034">
    <property type="entry name" value="DeoR_HTH"/>
</dbReference>
<dbReference type="InterPro" id="IPR013196">
    <property type="entry name" value="HTH_11"/>
</dbReference>
<dbReference type="InterPro" id="IPR036388">
    <property type="entry name" value="WH-like_DNA-bd_sf"/>
</dbReference>
<dbReference type="InterPro" id="IPR036390">
    <property type="entry name" value="WH_DNA-bd_sf"/>
</dbReference>
<dbReference type="InterPro" id="IPR026881">
    <property type="entry name" value="WYL_dom"/>
</dbReference>
<dbReference type="PANTHER" id="PTHR34580">
    <property type="match status" value="1"/>
</dbReference>
<dbReference type="PANTHER" id="PTHR34580:SF3">
    <property type="entry name" value="PROTEIN PAFB"/>
    <property type="match status" value="1"/>
</dbReference>
<dbReference type="Pfam" id="PF08279">
    <property type="entry name" value="HTH_11"/>
    <property type="match status" value="1"/>
</dbReference>
<dbReference type="Pfam" id="PF13280">
    <property type="entry name" value="WYL"/>
    <property type="match status" value="1"/>
</dbReference>
<dbReference type="SUPFAM" id="SSF46785">
    <property type="entry name" value="Winged helix' DNA-binding domain"/>
    <property type="match status" value="1"/>
</dbReference>
<dbReference type="PROSITE" id="PS51000">
    <property type="entry name" value="HTH_DEOR_2"/>
    <property type="match status" value="1"/>
</dbReference>
<dbReference type="PROSITE" id="PS52050">
    <property type="entry name" value="WYL"/>
    <property type="match status" value="1"/>
</dbReference>
<protein>
    <recommendedName>
        <fullName evidence="4">Stress-involved WYL domain-containing regulator</fullName>
    </recommendedName>
    <alternativeName>
        <fullName evidence="5">DeoR-family protein transcriptional regulator</fullName>
    </alternativeName>
    <alternativeName>
        <fullName evidence="6">HTH-type transcriptional regulator</fullName>
    </alternativeName>
    <alternativeName>
        <fullName evidence="6">Transcriptional activator SiwR</fullName>
    </alternativeName>
</protein>
<accession>A0QS56</accession>
<name>SIWR_MYCS2</name>
<comment type="function">
    <text evidence="3">Transcriptional activator (PubMed:38042942). Acts as a transcriptional activator of the MSMEG_1357-56 operon upon genotoxic stress (PubMed:38042942). Controls adjacent genes that belong to the DinB/YfiT-like putative metalloenzymes superfamily by upregulating their expression in response to various genotoxic stress conditions, including exposure to H(2)O(2) or the natural antibiotic zeocin, as well as mitomycin C (MMC), diamide and UVC radiation (PubMed:38042942). Upon genotoxic stress, upregulates two genes encoding proteins of the DinB/YfiT-like putative metalloenzymes superfamily, MSMEG_1357 and MSMEG_1356 (PubMed:38042942). Binds different forms of single-stranded DNA (ssDNA) with high affinity, primarily through its characteristic WYL domain (PubMed:38042942). Binds nucleic acids with single-stranded regions, such as polyT 20mer ssDNA, 5' tailed, 3' tailed and fork DNA, but not ssRNA (PubMed:38042942).</text>
</comment>
<comment type="subunit">
    <text evidence="3">Homodimer.</text>
</comment>
<comment type="domain">
    <text evidence="3">The HTH domain binds a palindrome in the promoter of the MSMEG_1357-56 operon.</text>
</comment>
<comment type="domain">
    <text evidence="3">The WYL domain is named after a conserved Trp-Tyr-Leu motif (PubMed:38042942). Mediates binding to single-stranded regions, such as polyT 20mer ssDNA, 5' tailed, 3' tailed and fork DNA, but not ssRNA (PubMed:38042942). May present a signal transducer in WYL domain-containing transcription factors by binding to ssDNA present during DNA damage and playing a role in transcriptional activation (PubMed:38042942).</text>
</comment>
<comment type="disruption phenotype">
    <text evidence="3">No difference in the growth behavior compared to wild type strain under standard culture conditions or in presence of 10mM or 1mM H(2)O(2), suggesting redundancy in the genotoxic stress response.</text>
</comment>
<comment type="miscellaneous">
    <text evidence="4">May be part of a putative operon containing two genes of the DinB/YfiT-like putative metalloenzymes superfamily, MSMEG_1357 and MSMEG_1356.</text>
</comment>
<feature type="chain" id="PRO_0000459998" description="Stress-involved WYL domain-containing regulator">
    <location>
        <begin position="1"/>
        <end position="320"/>
    </location>
</feature>
<feature type="domain" description="HTH deoR-type" evidence="1">
    <location>
        <begin position="7"/>
        <end position="65"/>
    </location>
</feature>
<feature type="domain" description="WYL" evidence="2">
    <location>
        <begin position="139"/>
        <end position="218"/>
    </location>
</feature>
<feature type="DNA-binding region" description="H-T-H motif" evidence="1">
    <location>
        <begin position="24"/>
        <end position="43"/>
    </location>
</feature>
<feature type="region of interest" description="WCX domain" evidence="4">
    <location>
        <begin position="245"/>
        <end position="320"/>
    </location>
</feature>
<feature type="mutagenesis site" description="Loss of transcriptional activation of the MSMEG_1357-56 operon genes MSMEG_1357 and MSMEG_1356." evidence="3">
    <original>RSVRR</original>
    <variation>ASVRA</variation>
    <location>
        <begin position="38"/>
        <end position="42"/>
    </location>
</feature>
<feature type="mutagenesis site" description="No impact on binding to the MSMEG_1357-56 operon promoter region. Loss of transcriptional activation of the MSMEG_1357-56 operon genes MSMEG_1357 and MSMEG_1356. Loss of polyT 20mer ssDNA-binding." evidence="3">
    <original>RLDR</original>
    <variation>ALDA</variation>
    <location>
        <begin position="204"/>
        <end position="207"/>
    </location>
</feature>
<proteinExistence type="evidence at protein level"/>
<gene>
    <name evidence="4" type="primary">siwR</name>
    <name evidence="7" type="ordered locus">MSMEG_1359</name>
</gene>
<evidence type="ECO:0000255" key="1">
    <source>
        <dbReference type="PROSITE-ProRule" id="PRU00349"/>
    </source>
</evidence>
<evidence type="ECO:0000255" key="2">
    <source>
        <dbReference type="PROSITE-ProRule" id="PRU01395"/>
    </source>
</evidence>
<evidence type="ECO:0000269" key="3">
    <source>
    </source>
</evidence>
<evidence type="ECO:0000303" key="4">
    <source>
    </source>
</evidence>
<evidence type="ECO:0000303" key="5">
    <source ref="1"/>
</evidence>
<evidence type="ECO:0000305" key="6"/>
<evidence type="ECO:0000312" key="7">
    <source>
        <dbReference type="EMBL" id="ABK72048.1"/>
    </source>
</evidence>
<evidence type="ECO:0000312" key="8">
    <source>
        <dbReference type="Proteomes" id="UP000000757"/>
    </source>
</evidence>
<reference evidence="8" key="1">
    <citation type="submission" date="2006-10" db="EMBL/GenBank/DDBJ databases">
        <authorList>
            <person name="Fleischmann R.D."/>
            <person name="Dodson R.J."/>
            <person name="Haft D.H."/>
            <person name="Merkel J.S."/>
            <person name="Nelson W.C."/>
            <person name="Fraser C.M."/>
        </authorList>
    </citation>
    <scope>NUCLEOTIDE SEQUENCE [LARGE SCALE GENOMIC DNA]</scope>
    <source>
        <strain evidence="8">ATCC 700084 / mc(2)155</strain>
    </source>
</reference>
<reference evidence="6" key="2">
    <citation type="journal article" date="2023" name="Commun. Biol.">
        <title>Novel WYL domain-containing transcriptional activator acts in response to genotoxic stress in rapidly growing mycobacteria.</title>
        <authorList>
            <person name="Keller L.M.L."/>
            <person name="Flattich K."/>
            <person name="Weber-Ban E."/>
        </authorList>
    </citation>
    <scope>FUNCTION</scope>
    <scope>SUBUNIT</scope>
    <scope>DOMAIN</scope>
    <scope>DISRUPTION PHENOTYPE</scope>
    <scope>MUTAGENESIS OF 38-ARG--ARG-42 AND 204-ARG--ARG-207</scope>
</reference>
<keyword id="KW-0010">Activator</keyword>
<keyword id="KW-0238">DNA-binding</keyword>
<keyword id="KW-1185">Reference proteome</keyword>
<keyword id="KW-0804">Transcription</keyword>
<keyword id="KW-0805">Transcription regulation</keyword>
<sequence length="320" mass="34862">MARTVDTTGRVVQLLGLLQSRRVWTGEELAERLGVTGRSVRRDIERLRELGYPVHASKGQGGGYQLGAGMALPPLLLDPDEAVAMAVCLRLAAGGSVAGVGESALRALSKLDQVMPARLRSQVAAIHDATVTLGPNATDTAVAPDVLMTLARACRDREHVSTGYTDLRGNQTQRRLEPYQLVTTGRRWYLMAYDRDREDWRSLRLDRMSDVRATGTTFTARPAPDAAAYVGRAISASAYPYVARVRYFAPEKVVAQRFPPGTATFEPDGPDACIVTSGAEYPEQLAMYFATVGHDFEVLEPAEVIDAVGAMADRLRRAVR</sequence>
<organism evidence="8">
    <name type="scientific">Mycolicibacterium smegmatis (strain ATCC 700084 / mc(2)155)</name>
    <name type="common">Mycobacterium smegmatis</name>
    <dbReference type="NCBI Taxonomy" id="246196"/>
    <lineage>
        <taxon>Bacteria</taxon>
        <taxon>Bacillati</taxon>
        <taxon>Actinomycetota</taxon>
        <taxon>Actinomycetes</taxon>
        <taxon>Mycobacteriales</taxon>
        <taxon>Mycobacteriaceae</taxon>
        <taxon>Mycolicibacterium</taxon>
    </lineage>
</organism>